<sequence length="336" mass="36707">MPQPSRPRKGSMGFSPRSRAASEVPRFNSWPDDEGQPGLQGFAGYKAGMSHVVAINDEPNSPREGQEETVPVTVVETPPMRAVAVRAYEDTPYGKRPLTEVWTDEVHEDLERSLSVPEEQSGDIEGDIRTALDEGALADVRVITHTVPGALSSVPKKEPDVMETRVGGGSLSDRVDFALDLVDDGGEHTVTDVFRAGEYTDVAGITKGKGTQGPVKRWGVQKRKGKHARQGWRRRIGNLGPWNPSRVRSTVPQQGQTGYHQRTELNKRLIDLGDDDVSPDGGFVNYGEVDGPYALVKGSVPGPDKRLVRFRPAVRPGDQPRLDPEVRYVSTASNQG</sequence>
<gene>
    <name evidence="1" type="primary">rpl3</name>
    <name type="ordered locus">NP_4854A</name>
</gene>
<reference key="1">
    <citation type="journal article" date="2005" name="Genome Res.">
        <title>Living with two extremes: conclusions from the genome sequence of Natronomonas pharaonis.</title>
        <authorList>
            <person name="Falb M."/>
            <person name="Pfeiffer F."/>
            <person name="Palm P."/>
            <person name="Rodewald K."/>
            <person name="Hickmann V."/>
            <person name="Tittor J."/>
            <person name="Oesterhelt D."/>
        </authorList>
    </citation>
    <scope>NUCLEOTIDE SEQUENCE [LARGE SCALE GENOMIC DNA]</scope>
    <source>
        <strain>ATCC 35678 / DSM 2160 / CIP 103997 / JCM 8858 / NBRC 14720 / NCIMB 2260 / Gabara</strain>
    </source>
</reference>
<comment type="function">
    <text evidence="1">One of the primary rRNA binding proteins, it binds directly near the 3'-end of the 23S rRNA, where it nucleates assembly of the 50S subunit.</text>
</comment>
<comment type="subunit">
    <text evidence="1">Part of the 50S ribosomal subunit. Forms a cluster with proteins L14 and L24e.</text>
</comment>
<comment type="similarity">
    <text evidence="1">Belongs to the universal ribosomal protein uL3 family.</text>
</comment>
<proteinExistence type="inferred from homology"/>
<protein>
    <recommendedName>
        <fullName evidence="1">Large ribosomal subunit protein uL3</fullName>
    </recommendedName>
    <alternativeName>
        <fullName evidence="3">50S ribosomal protein L3</fullName>
    </alternativeName>
</protein>
<accession>Q3IMY8</accession>
<evidence type="ECO:0000255" key="1">
    <source>
        <dbReference type="HAMAP-Rule" id="MF_01325"/>
    </source>
</evidence>
<evidence type="ECO:0000256" key="2">
    <source>
        <dbReference type="SAM" id="MobiDB-lite"/>
    </source>
</evidence>
<evidence type="ECO:0000305" key="3"/>
<name>RL3_NATPD</name>
<feature type="chain" id="PRO_0000241443" description="Large ribosomal subunit protein uL3">
    <location>
        <begin position="1"/>
        <end position="336"/>
    </location>
</feature>
<feature type="region of interest" description="Disordered" evidence="2">
    <location>
        <begin position="1"/>
        <end position="43"/>
    </location>
</feature>
<feature type="region of interest" description="Disordered" evidence="2">
    <location>
        <begin position="205"/>
        <end position="230"/>
    </location>
</feature>
<feature type="region of interest" description="Disordered" evidence="2">
    <location>
        <begin position="311"/>
        <end position="336"/>
    </location>
</feature>
<feature type="compositionally biased region" description="Basic residues" evidence="2">
    <location>
        <begin position="219"/>
        <end position="230"/>
    </location>
</feature>
<organism>
    <name type="scientific">Natronomonas pharaonis (strain ATCC 35678 / DSM 2160 / CIP 103997 / JCM 8858 / NBRC 14720 / NCIMB 2260 / Gabara)</name>
    <name type="common">Halobacterium pharaonis</name>
    <dbReference type="NCBI Taxonomy" id="348780"/>
    <lineage>
        <taxon>Archaea</taxon>
        <taxon>Methanobacteriati</taxon>
        <taxon>Methanobacteriota</taxon>
        <taxon>Stenosarchaea group</taxon>
        <taxon>Halobacteria</taxon>
        <taxon>Halobacteriales</taxon>
        <taxon>Haloarculaceae</taxon>
        <taxon>Natronomonas</taxon>
    </lineage>
</organism>
<dbReference type="EMBL" id="CR936257">
    <property type="protein sequence ID" value="CAI50518.1"/>
    <property type="molecule type" value="Genomic_DNA"/>
</dbReference>
<dbReference type="RefSeq" id="WP_011324130.1">
    <property type="nucleotide sequence ID" value="NC_007426.1"/>
</dbReference>
<dbReference type="SMR" id="Q3IMY8"/>
<dbReference type="STRING" id="348780.NP_4854A"/>
<dbReference type="EnsemblBacteria" id="CAI50518">
    <property type="protein sequence ID" value="CAI50518"/>
    <property type="gene ID" value="NP_4854A"/>
</dbReference>
<dbReference type="GeneID" id="3703137"/>
<dbReference type="KEGG" id="nph:NP_4854A"/>
<dbReference type="eggNOG" id="arCOG04070">
    <property type="taxonomic scope" value="Archaea"/>
</dbReference>
<dbReference type="HOGENOM" id="CLU_033361_2_0_2"/>
<dbReference type="OrthoDB" id="6121at2157"/>
<dbReference type="Proteomes" id="UP000002698">
    <property type="component" value="Chromosome"/>
</dbReference>
<dbReference type="GO" id="GO:0022625">
    <property type="term" value="C:cytosolic large ribosomal subunit"/>
    <property type="evidence" value="ECO:0007669"/>
    <property type="project" value="TreeGrafter"/>
</dbReference>
<dbReference type="GO" id="GO:0019843">
    <property type="term" value="F:rRNA binding"/>
    <property type="evidence" value="ECO:0007669"/>
    <property type="project" value="UniProtKB-UniRule"/>
</dbReference>
<dbReference type="GO" id="GO:0003735">
    <property type="term" value="F:structural constituent of ribosome"/>
    <property type="evidence" value="ECO:0007669"/>
    <property type="project" value="InterPro"/>
</dbReference>
<dbReference type="GO" id="GO:0006412">
    <property type="term" value="P:translation"/>
    <property type="evidence" value="ECO:0007669"/>
    <property type="project" value="UniProtKB-UniRule"/>
</dbReference>
<dbReference type="Gene3D" id="3.30.1430.10">
    <property type="match status" value="1"/>
</dbReference>
<dbReference type="Gene3D" id="4.10.960.10">
    <property type="entry name" value="Ribosomal protein L3, domain 3"/>
    <property type="match status" value="1"/>
</dbReference>
<dbReference type="Gene3D" id="2.40.30.10">
    <property type="entry name" value="Translation factors"/>
    <property type="match status" value="1"/>
</dbReference>
<dbReference type="HAMAP" id="MF_01325_A">
    <property type="entry name" value="Ribosomal_uL3_A"/>
    <property type="match status" value="1"/>
</dbReference>
<dbReference type="InterPro" id="IPR045077">
    <property type="entry name" value="L3_arc_euk"/>
</dbReference>
<dbReference type="InterPro" id="IPR044892">
    <property type="entry name" value="Ribosomal_L3_dom_3_arc_sf"/>
</dbReference>
<dbReference type="InterPro" id="IPR000597">
    <property type="entry name" value="Ribosomal_uL3"/>
</dbReference>
<dbReference type="InterPro" id="IPR019928">
    <property type="entry name" value="Ribosomal_uL3_arc"/>
</dbReference>
<dbReference type="InterPro" id="IPR019926">
    <property type="entry name" value="Ribosomal_uL3_CS"/>
</dbReference>
<dbReference type="InterPro" id="IPR009000">
    <property type="entry name" value="Transl_B-barrel_sf"/>
</dbReference>
<dbReference type="NCBIfam" id="TIGR03626">
    <property type="entry name" value="L3_arch"/>
    <property type="match status" value="1"/>
</dbReference>
<dbReference type="NCBIfam" id="NF003261">
    <property type="entry name" value="PRK04231.1"/>
    <property type="match status" value="1"/>
</dbReference>
<dbReference type="PANTHER" id="PTHR11363">
    <property type="entry name" value="60S RIBOSOMAL PROTEIN L3-RELATED"/>
    <property type="match status" value="1"/>
</dbReference>
<dbReference type="PANTHER" id="PTHR11363:SF5">
    <property type="entry name" value="LARGE RIBOSOMAL SUBUNIT PROTEIN UL3"/>
    <property type="match status" value="1"/>
</dbReference>
<dbReference type="Pfam" id="PF00297">
    <property type="entry name" value="Ribosomal_L3"/>
    <property type="match status" value="1"/>
</dbReference>
<dbReference type="SUPFAM" id="SSF50447">
    <property type="entry name" value="Translation proteins"/>
    <property type="match status" value="1"/>
</dbReference>
<dbReference type="PROSITE" id="PS00474">
    <property type="entry name" value="RIBOSOMAL_L3"/>
    <property type="match status" value="1"/>
</dbReference>
<keyword id="KW-1185">Reference proteome</keyword>
<keyword id="KW-0687">Ribonucleoprotein</keyword>
<keyword id="KW-0689">Ribosomal protein</keyword>
<keyword id="KW-0694">RNA-binding</keyword>
<keyword id="KW-0699">rRNA-binding</keyword>